<name>ATG9_YARLI</name>
<gene>
    <name evidence="2" type="primary">ATG9</name>
    <name evidence="5" type="ordered locus">YALI0F08349g</name>
</gene>
<dbReference type="EMBL" id="CR382132">
    <property type="protein sequence ID" value="CAG77964.1"/>
    <property type="molecule type" value="Genomic_DNA"/>
</dbReference>
<dbReference type="RefSeq" id="XP_505157.1">
    <property type="nucleotide sequence ID" value="XM_505157.1"/>
</dbReference>
<dbReference type="SMR" id="Q6C2F5"/>
<dbReference type="FunCoup" id="Q6C2F5">
    <property type="interactions" value="233"/>
</dbReference>
<dbReference type="STRING" id="284591.Q6C2F5"/>
<dbReference type="EnsemblFungi" id="CAG77964">
    <property type="protein sequence ID" value="CAG77964"/>
    <property type="gene ID" value="YALI0_F08349g"/>
</dbReference>
<dbReference type="KEGG" id="yli:2908497"/>
<dbReference type="VEuPathDB" id="FungiDB:YALI0_F08349g"/>
<dbReference type="HOGENOM" id="CLU_006200_1_1_1"/>
<dbReference type="InParanoid" id="Q6C2F5"/>
<dbReference type="OMA" id="ELMTISW"/>
<dbReference type="OrthoDB" id="125378at4891"/>
<dbReference type="Proteomes" id="UP000001300">
    <property type="component" value="Chromosome F"/>
</dbReference>
<dbReference type="GO" id="GO:0005776">
    <property type="term" value="C:autophagosome"/>
    <property type="evidence" value="ECO:0000318"/>
    <property type="project" value="GO_Central"/>
</dbReference>
<dbReference type="GO" id="GO:0030659">
    <property type="term" value="C:cytoplasmic vesicle membrane"/>
    <property type="evidence" value="ECO:0007669"/>
    <property type="project" value="UniProtKB-SubCell"/>
</dbReference>
<dbReference type="GO" id="GO:0005789">
    <property type="term" value="C:endoplasmic reticulum membrane"/>
    <property type="evidence" value="ECO:0007669"/>
    <property type="project" value="UniProtKB-SubCell"/>
</dbReference>
<dbReference type="GO" id="GO:0000139">
    <property type="term" value="C:Golgi membrane"/>
    <property type="evidence" value="ECO:0007669"/>
    <property type="project" value="UniProtKB-SubCell"/>
</dbReference>
<dbReference type="GO" id="GO:0005739">
    <property type="term" value="C:mitochondrion"/>
    <property type="evidence" value="ECO:0007669"/>
    <property type="project" value="EnsemblFungi"/>
</dbReference>
<dbReference type="GO" id="GO:0061908">
    <property type="term" value="C:phagophore"/>
    <property type="evidence" value="ECO:0007669"/>
    <property type="project" value="EnsemblFungi"/>
</dbReference>
<dbReference type="GO" id="GO:0000407">
    <property type="term" value="C:phagophore assembly site"/>
    <property type="evidence" value="ECO:0000318"/>
    <property type="project" value="GO_Central"/>
</dbReference>
<dbReference type="GO" id="GO:0034045">
    <property type="term" value="C:phagophore assembly site membrane"/>
    <property type="evidence" value="ECO:0007669"/>
    <property type="project" value="UniProtKB-SubCell"/>
</dbReference>
<dbReference type="GO" id="GO:0017128">
    <property type="term" value="F:phospholipid scramblase activity"/>
    <property type="evidence" value="ECO:0007669"/>
    <property type="project" value="EnsemblFungi"/>
</dbReference>
<dbReference type="GO" id="GO:0032258">
    <property type="term" value="P:cytoplasm to vacuole targeting by the Cvt pathway"/>
    <property type="evidence" value="ECO:0007669"/>
    <property type="project" value="EnsemblFungi"/>
</dbReference>
<dbReference type="GO" id="GO:0000423">
    <property type="term" value="P:mitophagy"/>
    <property type="evidence" value="ECO:0000318"/>
    <property type="project" value="GO_Central"/>
</dbReference>
<dbReference type="GO" id="GO:0034727">
    <property type="term" value="P:piecemeal microautophagy of the nucleus"/>
    <property type="evidence" value="ECO:0000318"/>
    <property type="project" value="GO_Central"/>
</dbReference>
<dbReference type="GO" id="GO:0034497">
    <property type="term" value="P:protein localization to phagophore assembly site"/>
    <property type="evidence" value="ECO:0000318"/>
    <property type="project" value="GO_Central"/>
</dbReference>
<dbReference type="GO" id="GO:0061709">
    <property type="term" value="P:reticulophagy"/>
    <property type="evidence" value="ECO:0000318"/>
    <property type="project" value="GO_Central"/>
</dbReference>
<dbReference type="InterPro" id="IPR007241">
    <property type="entry name" value="Autophagy-rel_prot_9"/>
</dbReference>
<dbReference type="InterPro" id="IPR018247">
    <property type="entry name" value="EF_Hand_1_Ca_BS"/>
</dbReference>
<dbReference type="PANTHER" id="PTHR13038">
    <property type="entry name" value="APG9 AUTOPHAGY 9"/>
    <property type="match status" value="1"/>
</dbReference>
<dbReference type="PANTHER" id="PTHR13038:SF10">
    <property type="entry name" value="AUTOPHAGY-RELATED PROTEIN 9"/>
    <property type="match status" value="1"/>
</dbReference>
<dbReference type="Pfam" id="PF04109">
    <property type="entry name" value="ATG9"/>
    <property type="match status" value="1"/>
</dbReference>
<organism>
    <name type="scientific">Yarrowia lipolytica (strain CLIB 122 / E 150)</name>
    <name type="common">Yeast</name>
    <name type="synonym">Candida lipolytica</name>
    <dbReference type="NCBI Taxonomy" id="284591"/>
    <lineage>
        <taxon>Eukaryota</taxon>
        <taxon>Fungi</taxon>
        <taxon>Dikarya</taxon>
        <taxon>Ascomycota</taxon>
        <taxon>Saccharomycotina</taxon>
        <taxon>Dipodascomycetes</taxon>
        <taxon>Dipodascales</taxon>
        <taxon>Dipodascales incertae sedis</taxon>
        <taxon>Yarrowia</taxon>
    </lineage>
</organism>
<sequence length="788" mass="89850">MTDKSTFLSVLFGGGSVYQDLDGDGEVEDAEILRRVEEEHAQTSDNSNSDNDSGNDSDVPTSLMVEGVQDPKPGSKRRQPHRMATLSNLQSSAGPGARSVSFAQGTKTQTPIRLTKPTGVANGGLPRHKQDLGASIRTMVDPKELALWKWANVQNLDNFFAEAYMYYTGKGLVSIILSRVLNMSTIMFVVVFSTYLGSCIDYSKIKGSRTLDEVHVKQCYAKLGSFHVFVLWTFFVLWFMKLFQYVKDIRRLVDMKSFYQELLEIDENELQTISWPQVAKRMATLSEANAATQVGNSTKQRIEPHDIANRVMRKENYLVAMFHKRVLNMTVPLPQPLQRIFGRPQLLSRALEWNLSLCILDYVFNPAGQVRPMFLKSTHKQILSTGLRRRFVFAAIMNVVFAPFIILYLALLYFFRYFNEYHKNPASIGTRRYNPLAEWKLREYNELPHQFERRLTLSYIPASKYLDQFPKEKTALVSKFVSFIAGSFAAVLGIASLIDPELFLMFEISANRTVLFYIGVFGSILAVSRSLIPEETLVFDPEISLRYVAEFTHYLPPEWEGKLHTEQVKNEFSLMYEMRLIILLKELASIFLAPFILYYSLTQSCDDIVDFIRDHSVHVDGLGYVCTFAMFDFKQKSPDHQPDEDQKMLKSYLYFMDHYGDKPTNVSQTQQNVPMYSSVRLKNDGLDLNNSIMQKFQKHNGHHALSGLTQRDVGLSPAAPTATTATSGTATGAAPRRDLINFDVDESFIDQTTSNRDMDNDEQPKDKERVVDMLNQFYKKTDNMNLGA</sequence>
<accession>Q6C2F5</accession>
<evidence type="ECO:0000250" key="1">
    <source>
        <dbReference type="UniProtKB" id="O74312"/>
    </source>
</evidence>
<evidence type="ECO:0000250" key="2">
    <source>
        <dbReference type="UniProtKB" id="Q12142"/>
    </source>
</evidence>
<evidence type="ECO:0000255" key="3"/>
<evidence type="ECO:0000256" key="4">
    <source>
        <dbReference type="SAM" id="MobiDB-lite"/>
    </source>
</evidence>
<evidence type="ECO:0000303" key="5">
    <source>
    </source>
</evidence>
<evidence type="ECO:0000305" key="6"/>
<keyword id="KW-0072">Autophagy</keyword>
<keyword id="KW-0968">Cytoplasmic vesicle</keyword>
<keyword id="KW-0256">Endoplasmic reticulum</keyword>
<keyword id="KW-0333">Golgi apparatus</keyword>
<keyword id="KW-0445">Lipid transport</keyword>
<keyword id="KW-0472">Membrane</keyword>
<keyword id="KW-1185">Reference proteome</keyword>
<keyword id="KW-0812">Transmembrane</keyword>
<keyword id="KW-1133">Transmembrane helix</keyword>
<keyword id="KW-0813">Transport</keyword>
<reference key="1">
    <citation type="journal article" date="2004" name="Nature">
        <title>Genome evolution in yeasts.</title>
        <authorList>
            <person name="Dujon B."/>
            <person name="Sherman D."/>
            <person name="Fischer G."/>
            <person name="Durrens P."/>
            <person name="Casaregola S."/>
            <person name="Lafontaine I."/>
            <person name="de Montigny J."/>
            <person name="Marck C."/>
            <person name="Neuveglise C."/>
            <person name="Talla E."/>
            <person name="Goffard N."/>
            <person name="Frangeul L."/>
            <person name="Aigle M."/>
            <person name="Anthouard V."/>
            <person name="Babour A."/>
            <person name="Barbe V."/>
            <person name="Barnay S."/>
            <person name="Blanchin S."/>
            <person name="Beckerich J.-M."/>
            <person name="Beyne E."/>
            <person name="Bleykasten C."/>
            <person name="Boisrame A."/>
            <person name="Boyer J."/>
            <person name="Cattolico L."/>
            <person name="Confanioleri F."/>
            <person name="de Daruvar A."/>
            <person name="Despons L."/>
            <person name="Fabre E."/>
            <person name="Fairhead C."/>
            <person name="Ferry-Dumazet H."/>
            <person name="Groppi A."/>
            <person name="Hantraye F."/>
            <person name="Hennequin C."/>
            <person name="Jauniaux N."/>
            <person name="Joyet P."/>
            <person name="Kachouri R."/>
            <person name="Kerrest A."/>
            <person name="Koszul R."/>
            <person name="Lemaire M."/>
            <person name="Lesur I."/>
            <person name="Ma L."/>
            <person name="Muller H."/>
            <person name="Nicaud J.-M."/>
            <person name="Nikolski M."/>
            <person name="Oztas S."/>
            <person name="Ozier-Kalogeropoulos O."/>
            <person name="Pellenz S."/>
            <person name="Potier S."/>
            <person name="Richard G.-F."/>
            <person name="Straub M.-L."/>
            <person name="Suleau A."/>
            <person name="Swennen D."/>
            <person name="Tekaia F."/>
            <person name="Wesolowski-Louvel M."/>
            <person name="Westhof E."/>
            <person name="Wirth B."/>
            <person name="Zeniou-Meyer M."/>
            <person name="Zivanovic Y."/>
            <person name="Bolotin-Fukuhara M."/>
            <person name="Thierry A."/>
            <person name="Bouchier C."/>
            <person name="Caudron B."/>
            <person name="Scarpelli C."/>
            <person name="Gaillardin C."/>
            <person name="Weissenbach J."/>
            <person name="Wincker P."/>
            <person name="Souciet J.-L."/>
        </authorList>
    </citation>
    <scope>NUCLEOTIDE SEQUENCE [LARGE SCALE GENOMIC DNA]</scope>
    <source>
        <strain>CLIB 122 / E 150</strain>
    </source>
</reference>
<proteinExistence type="inferred from homology"/>
<comment type="function">
    <text evidence="2">Phospholipid scramblase involved in autophagy and cytoplasm to vacuole transport (Cvt) vesicle formation. Cycles between the preautophagosomal structure/phagophore assembly site (PAS) and the cytoplasmic vesicle pool and supplies membrane for the growing autophagosome. Lipid scramblase activity plays a key role in preautophagosomal structure/phagophore assembly by distributing the phospholipids that arrive through ATG2 from the cytoplasmic to the luminal leaflet of the bilayer, thereby driving autophagosomal membrane expansion. Required for mitophagy. Also involved in endoplasmic reticulum-specific autophagic process and is essential for the survival of cells subjected to severe ER stress. Different machineries are required for anterograde trafficking to the PAS during either the Cvt pathway or bulk autophagy and for retrograde trafficking.</text>
</comment>
<comment type="catalytic activity">
    <reaction evidence="2">
        <text>a 1,2-diacyl-sn-glycero-3-phosphocholine(in) = a 1,2-diacyl-sn-glycero-3-phosphocholine(out)</text>
        <dbReference type="Rhea" id="RHEA:38571"/>
        <dbReference type="ChEBI" id="CHEBI:57643"/>
    </reaction>
</comment>
<comment type="catalytic activity">
    <reaction evidence="2">
        <text>a 1,2-diacyl-sn-glycero-3-phospho-L-serine(in) = a 1,2-diacyl-sn-glycero-3-phospho-L-serine(out)</text>
        <dbReference type="Rhea" id="RHEA:38663"/>
        <dbReference type="ChEBI" id="CHEBI:57262"/>
    </reaction>
</comment>
<comment type="catalytic activity">
    <reaction evidence="2">
        <text>a 1,2-diacyl-sn-glycero-3-phosphoethanolamine(in) = a 1,2-diacyl-sn-glycero-3-phosphoethanolamine(out)</text>
        <dbReference type="Rhea" id="RHEA:38895"/>
        <dbReference type="ChEBI" id="CHEBI:64612"/>
    </reaction>
</comment>
<comment type="catalytic activity">
    <reaction evidence="2">
        <text>a 1,2-diacyl-sn-glycero-3-phospho-(1D-myo-inositol-3-phosphate)(in) = a 1,2-diacyl-sn-glycero-3-phospho-(1D-myo-inositol-3-phosphate)(out)</text>
        <dbReference type="Rhea" id="RHEA:67920"/>
        <dbReference type="ChEBI" id="CHEBI:58088"/>
    </reaction>
</comment>
<comment type="subunit">
    <text evidence="1">Homotrimer; forms a homotrimer with a central pore that forms a path between the two membrane leaflets.</text>
</comment>
<comment type="subcellular location">
    <subcellularLocation>
        <location evidence="2">Preautophagosomal structure membrane</location>
        <topology evidence="2">Multi-pass membrane protein</topology>
    </subcellularLocation>
    <subcellularLocation>
        <location evidence="2">Cytoplasmic vesicle membrane</location>
        <topology evidence="2">Multi-pass membrane protein</topology>
    </subcellularLocation>
    <subcellularLocation>
        <location evidence="2">Golgi apparatus membrane</location>
        <topology evidence="2">Multi-pass membrane protein</topology>
    </subcellularLocation>
    <subcellularLocation>
        <location evidence="2">Endoplasmic reticulum membrane</location>
        <topology evidence="2">Multi-pass membrane protein</topology>
    </subcellularLocation>
</comment>
<comment type="domain">
    <text evidence="1">Forms a homotrimer with a solvated central pore, which is connected laterally to the cytosol through the cavity within each protomer. Acts as a lipid scramblase that uses its central pore to function: the central pore opens laterally to accommodate lipid headgroups, thereby enabling lipid flipping and redistribution of lipids added to the outer leaflet of ATG9-containing vesicles, thereby enabling growth into autophagosomes.</text>
</comment>
<comment type="PTM">
    <text evidence="2">Phosphorylated by ATG1. ATG1 phosphorylation is required for preautophagosome elongation.</text>
</comment>
<comment type="similarity">
    <text evidence="6">Belongs to the ATG9 family.</text>
</comment>
<feature type="chain" id="PRO_0000119838" description="Autophagy-related protein 9">
    <location>
        <begin position="1"/>
        <end position="788"/>
    </location>
</feature>
<feature type="topological domain" description="Cytoplasmic" evidence="6">
    <location>
        <begin position="1"/>
        <end position="171"/>
    </location>
</feature>
<feature type="transmembrane region" description="Helical" evidence="3">
    <location>
        <begin position="172"/>
        <end position="192"/>
    </location>
</feature>
<feature type="topological domain" description="Lumenal" evidence="6">
    <location>
        <begin position="193"/>
        <end position="222"/>
    </location>
</feature>
<feature type="transmembrane region" description="Helical" evidence="3">
    <location>
        <begin position="223"/>
        <end position="243"/>
    </location>
</feature>
<feature type="topological domain" description="Cytoplasmic" evidence="6">
    <location>
        <begin position="244"/>
        <end position="390"/>
    </location>
</feature>
<feature type="intramembrane region" evidence="1">
    <location>
        <position position="391"/>
    </location>
</feature>
<feature type="topological domain" description="Cytoplasmic" evidence="6">
    <location>
        <begin position="392"/>
        <end position="479"/>
    </location>
</feature>
<feature type="transmembrane region" description="Helical" evidence="3">
    <location>
        <begin position="480"/>
        <end position="500"/>
    </location>
</feature>
<feature type="topological domain" description="Lumenal" evidence="6">
    <location>
        <begin position="501"/>
        <end position="512"/>
    </location>
</feature>
<feature type="transmembrane region" description="Helical" evidence="3">
    <location>
        <begin position="513"/>
        <end position="533"/>
    </location>
</feature>
<feature type="topological domain" description="Cytoplasmic" evidence="6">
    <location>
        <begin position="534"/>
        <end position="579"/>
    </location>
</feature>
<feature type="intramembrane region" evidence="1">
    <location>
        <begin position="580"/>
        <end position="600"/>
    </location>
</feature>
<feature type="topological domain" description="Cytoplasmic" evidence="6">
    <location>
        <begin position="601"/>
        <end position="788"/>
    </location>
</feature>
<feature type="region of interest" description="Disordered" evidence="4">
    <location>
        <begin position="32"/>
        <end position="127"/>
    </location>
</feature>
<feature type="region of interest" description="Disordered" evidence="4">
    <location>
        <begin position="715"/>
        <end position="736"/>
    </location>
</feature>
<feature type="compositionally biased region" description="Basic and acidic residues" evidence="4">
    <location>
        <begin position="32"/>
        <end position="42"/>
    </location>
</feature>
<feature type="compositionally biased region" description="Low complexity" evidence="4">
    <location>
        <begin position="44"/>
        <end position="58"/>
    </location>
</feature>
<feature type="compositionally biased region" description="Polar residues" evidence="4">
    <location>
        <begin position="101"/>
        <end position="112"/>
    </location>
</feature>
<feature type="compositionally biased region" description="Low complexity" evidence="4">
    <location>
        <begin position="716"/>
        <end position="734"/>
    </location>
</feature>
<protein>
    <recommendedName>
        <fullName evidence="2">Autophagy-related protein 9</fullName>
    </recommendedName>
</protein>